<protein>
    <recommendedName>
        <fullName>Probable kinetochore protein NDC80</fullName>
    </recommendedName>
</protein>
<name>NDC80_CANAL</name>
<evidence type="ECO:0000250" key="1"/>
<evidence type="ECO:0000255" key="2"/>
<evidence type="ECO:0000256" key="3">
    <source>
        <dbReference type="SAM" id="MobiDB-lite"/>
    </source>
</evidence>
<evidence type="ECO:0000305" key="4"/>
<proteinExistence type="inferred from homology"/>
<dbReference type="EMBL" id="CP017630">
    <property type="protein sequence ID" value="AOW31011.1"/>
    <property type="molecule type" value="Genomic_DNA"/>
</dbReference>
<dbReference type="RefSeq" id="XP_715758.2">
    <property type="nucleotide sequence ID" value="XM_710665.2"/>
</dbReference>
<dbReference type="SMR" id="Q5A216"/>
<dbReference type="BioGRID" id="1225642">
    <property type="interactions" value="1"/>
</dbReference>
<dbReference type="FunCoup" id="Q5A216">
    <property type="interactions" value="307"/>
</dbReference>
<dbReference type="STRING" id="237561.Q5A216"/>
<dbReference type="EnsemblFungi" id="CR_02680W_A-T">
    <property type="protein sequence ID" value="CR_02680W_A-T-p1"/>
    <property type="gene ID" value="CR_02680W_A"/>
</dbReference>
<dbReference type="GeneID" id="3642573"/>
<dbReference type="KEGG" id="cal:CAALFM_CR02680WA"/>
<dbReference type="CGD" id="CAL0000189198">
    <property type="gene designation" value="orf19.10345"/>
</dbReference>
<dbReference type="VEuPathDB" id="FungiDB:CR_02680W_A"/>
<dbReference type="eggNOG" id="KOG0995">
    <property type="taxonomic scope" value="Eukaryota"/>
</dbReference>
<dbReference type="HOGENOM" id="CLU_012583_1_0_1"/>
<dbReference type="InParanoid" id="Q5A216"/>
<dbReference type="OrthoDB" id="7459479at2759"/>
<dbReference type="PRO" id="PR:Q5A216"/>
<dbReference type="Proteomes" id="UP000000559">
    <property type="component" value="Chromosome R"/>
</dbReference>
<dbReference type="GO" id="GO:0031262">
    <property type="term" value="C:Ndc80 complex"/>
    <property type="evidence" value="ECO:0000250"/>
    <property type="project" value="UniProtKB"/>
</dbReference>
<dbReference type="GO" id="GO:0005634">
    <property type="term" value="C:nucleus"/>
    <property type="evidence" value="ECO:0007669"/>
    <property type="project" value="UniProtKB-SubCell"/>
</dbReference>
<dbReference type="GO" id="GO:0008017">
    <property type="term" value="F:microtubule binding"/>
    <property type="evidence" value="ECO:0000250"/>
    <property type="project" value="UniProtKB"/>
</dbReference>
<dbReference type="GO" id="GO:0051315">
    <property type="term" value="P:attachment of mitotic spindle microtubules to kinetochore"/>
    <property type="evidence" value="ECO:0000318"/>
    <property type="project" value="GO_Central"/>
</dbReference>
<dbReference type="GO" id="GO:0051301">
    <property type="term" value="P:cell division"/>
    <property type="evidence" value="ECO:0007669"/>
    <property type="project" value="UniProtKB-KW"/>
</dbReference>
<dbReference type="GO" id="GO:1990758">
    <property type="term" value="P:mitotic sister chromatid biorientation"/>
    <property type="evidence" value="ECO:0000250"/>
    <property type="project" value="UniProtKB"/>
</dbReference>
<dbReference type="FunFam" id="1.10.418.30:FF:000001">
    <property type="entry name" value="Probable kinetochore protein ndc80"/>
    <property type="match status" value="1"/>
</dbReference>
<dbReference type="Gene3D" id="1.10.418.30">
    <property type="entry name" value="Ncd80 complex, Ncd80 subunit"/>
    <property type="match status" value="1"/>
</dbReference>
<dbReference type="InterPro" id="IPR005550">
    <property type="entry name" value="Kinetochore_Ndc80"/>
</dbReference>
<dbReference type="InterPro" id="IPR055260">
    <property type="entry name" value="Ndc80_CH"/>
</dbReference>
<dbReference type="InterPro" id="IPR038273">
    <property type="entry name" value="Ndc80_sf"/>
</dbReference>
<dbReference type="PANTHER" id="PTHR10643">
    <property type="entry name" value="KINETOCHORE PROTEIN NDC80"/>
    <property type="match status" value="1"/>
</dbReference>
<dbReference type="PANTHER" id="PTHR10643:SF2">
    <property type="entry name" value="KINETOCHORE PROTEIN NDC80 HOMOLOG"/>
    <property type="match status" value="1"/>
</dbReference>
<dbReference type="Pfam" id="PF03801">
    <property type="entry name" value="Ndc80_HEC"/>
    <property type="match status" value="1"/>
</dbReference>
<organism>
    <name type="scientific">Candida albicans (strain SC5314 / ATCC MYA-2876)</name>
    <name type="common">Yeast</name>
    <dbReference type="NCBI Taxonomy" id="237561"/>
    <lineage>
        <taxon>Eukaryota</taxon>
        <taxon>Fungi</taxon>
        <taxon>Dikarya</taxon>
        <taxon>Ascomycota</taxon>
        <taxon>Saccharomycotina</taxon>
        <taxon>Pichiomycetes</taxon>
        <taxon>Debaryomycetaceae</taxon>
        <taxon>Candida/Lodderomyces clade</taxon>
        <taxon>Candida</taxon>
    </lineage>
</organism>
<gene>
    <name type="primary">NDC80</name>
    <name type="ordered locus">CAALFM_CR02680WA</name>
    <name type="ORF">CaO19.10345</name>
    <name type="ORF">CaO19.2827</name>
</gene>
<feature type="chain" id="PRO_0000246634" description="Probable kinetochore protein NDC80">
    <location>
        <begin position="1"/>
        <end position="788"/>
    </location>
</feature>
<feature type="region of interest" description="Disordered" evidence="3">
    <location>
        <begin position="1"/>
        <end position="42"/>
    </location>
</feature>
<feature type="region of interest" description="Disordered" evidence="3">
    <location>
        <begin position="66"/>
        <end position="119"/>
    </location>
</feature>
<feature type="region of interest" description="Disordered" evidence="3">
    <location>
        <begin position="155"/>
        <end position="205"/>
    </location>
</feature>
<feature type="region of interest" description="Disordered" evidence="3">
    <location>
        <begin position="351"/>
        <end position="373"/>
    </location>
</feature>
<feature type="region of interest" description="Disordered" evidence="3">
    <location>
        <begin position="559"/>
        <end position="582"/>
    </location>
</feature>
<feature type="coiled-coil region" evidence="2">
    <location>
        <begin position="346"/>
        <end position="788"/>
    </location>
</feature>
<feature type="compositionally biased region" description="Low complexity" evidence="3">
    <location>
        <begin position="14"/>
        <end position="38"/>
    </location>
</feature>
<feature type="compositionally biased region" description="Low complexity" evidence="3">
    <location>
        <begin position="76"/>
        <end position="95"/>
    </location>
</feature>
<feature type="compositionally biased region" description="Low complexity" evidence="3">
    <location>
        <begin position="155"/>
        <end position="197"/>
    </location>
</feature>
<feature type="compositionally biased region" description="Acidic residues" evidence="3">
    <location>
        <begin position="567"/>
        <end position="579"/>
    </location>
</feature>
<accession>Q5A216</accession>
<accession>A0A1D8PSA2</accession>
<keyword id="KW-0131">Cell cycle</keyword>
<keyword id="KW-0132">Cell division</keyword>
<keyword id="KW-0137">Centromere</keyword>
<keyword id="KW-0158">Chromosome</keyword>
<keyword id="KW-0175">Coiled coil</keyword>
<keyword id="KW-0995">Kinetochore</keyword>
<keyword id="KW-0498">Mitosis</keyword>
<keyword id="KW-0539">Nucleus</keyword>
<keyword id="KW-1185">Reference proteome</keyword>
<reference key="1">
    <citation type="journal article" date="2004" name="Proc. Natl. Acad. Sci. U.S.A.">
        <title>The diploid genome sequence of Candida albicans.</title>
        <authorList>
            <person name="Jones T."/>
            <person name="Federspiel N.A."/>
            <person name="Chibana H."/>
            <person name="Dungan J."/>
            <person name="Kalman S."/>
            <person name="Magee B.B."/>
            <person name="Newport G."/>
            <person name="Thorstenson Y.R."/>
            <person name="Agabian N."/>
            <person name="Magee P.T."/>
            <person name="Davis R.W."/>
            <person name="Scherer S."/>
        </authorList>
    </citation>
    <scope>NUCLEOTIDE SEQUENCE [LARGE SCALE GENOMIC DNA]</scope>
    <source>
        <strain>SC5314 / ATCC MYA-2876</strain>
    </source>
</reference>
<reference key="2">
    <citation type="journal article" date="2007" name="Genome Biol.">
        <title>Assembly of the Candida albicans genome into sixteen supercontigs aligned on the eight chromosomes.</title>
        <authorList>
            <person name="van het Hoog M."/>
            <person name="Rast T.J."/>
            <person name="Martchenko M."/>
            <person name="Grindle S."/>
            <person name="Dignard D."/>
            <person name="Hogues H."/>
            <person name="Cuomo C."/>
            <person name="Berriman M."/>
            <person name="Scherer S."/>
            <person name="Magee B.B."/>
            <person name="Whiteway M."/>
            <person name="Chibana H."/>
            <person name="Nantel A."/>
            <person name="Magee P.T."/>
        </authorList>
    </citation>
    <scope>GENOME REANNOTATION</scope>
    <source>
        <strain>SC5314 / ATCC MYA-2876</strain>
    </source>
</reference>
<reference key="3">
    <citation type="journal article" date="2013" name="Genome Biol.">
        <title>Assembly of a phased diploid Candida albicans genome facilitates allele-specific measurements and provides a simple model for repeat and indel structure.</title>
        <authorList>
            <person name="Muzzey D."/>
            <person name="Schwartz K."/>
            <person name="Weissman J.S."/>
            <person name="Sherlock G."/>
        </authorList>
    </citation>
    <scope>NUCLEOTIDE SEQUENCE [LARGE SCALE GENOMIC DNA]</scope>
    <scope>GENOME REANNOTATION</scope>
    <source>
        <strain>SC5314 / ATCC MYA-2876</strain>
    </source>
</reference>
<sequence>MSQTSNPIYGLRRNNGFAGGSNPSNNNNNNSNNNHNGNRISLGSATRTSSIISNNLPFRQSLLHGNYDNAINNTPSTSSLQKQSQQQQQSSQTSQTKRRSTLLSTPATTTKRRQSMMGNNLHQQHQYGSTALRHSTQPSSSMNSQFNQALQHVSPYYNPTSYSSQTPSSQPSSQQYQQQQQQANIPSSASSSQQQQSMDPRPLKDKKYQELIQKEIIRYLIDYKFEIKTNIALTENILKSPTQKNFNAIFKFLYNQLDPNYMFIKSSIEQEIVTLLKLLNYPYMHTITRSHFSAVGGNNWPTFLGILYWLVELNLSLSTLNDDDFLADDDFDKIFIEYIWKSYSLFINDEEEEEQQQQEQQQQANNGGSGGGGGDKFYNDMKIKFDQLQEKLNQELNNVEQQHENLLNKYHELNNQLKIRDDALKKTVALEEDYMKLKSYNQNVEKMMPEWNKKLEQLSNEVISYEEQMNKLQDEKKSIEMDLQQRGISIDKVNELYIKRDQLSKSIEIISNKIDDLKEKLSGRSFDLEKNFDNLENLTNQYNEITNKFNYYYYQQIQQNQQQDQQQQEEEEEEEEEEEHQLIPQFGLKLDENIKTTNERRQFTRDEIFLNINVKQERQNLLNFRNELDHQILNDRSQAMKFNEKCDIEQDKIKDQQSIIEELKIQDSLMKRKSDDLKQTIFQIQNEFNSQIESLDQQIRETKSNIQSDILQLERKLRDVNLNKSLIQEQLIGKRQKIDEDVINLTSFILKFKTNIQEKLINIADIVQDQLKKEQQQQQQQQASQQLE</sequence>
<comment type="function">
    <text evidence="1">Acts as a component of the essential kinetochore-associated NDC80 complex, which is required for chromosome segregation and spindle checkpoint activity.</text>
</comment>
<comment type="subunit">
    <text evidence="1">Component of the NDC80 complex, which consists of NDC80, NUF2, SPC24 and SPC25.</text>
</comment>
<comment type="subcellular location">
    <subcellularLocation>
        <location evidence="1">Nucleus</location>
    </subcellularLocation>
    <subcellularLocation>
        <location evidence="1">Chromosome</location>
        <location evidence="1">Centromere</location>
        <location evidence="1">Kinetochore</location>
    </subcellularLocation>
    <text evidence="1">Associated with kinetochores.</text>
</comment>
<comment type="similarity">
    <text evidence="4">Belongs to the NDC80/HEC1 family.</text>
</comment>